<name>PHOSP_IHNVW</name>
<reference key="1">
    <citation type="journal article" date="1995" name="Virus Res.">
        <title>The complete genome structure and phylogenetic relationship of infectious hematopoietic necrosis virus.</title>
        <authorList>
            <person name="Morzunov S.P."/>
            <person name="Winton J.R."/>
            <person name="Nichol S.T."/>
        </authorList>
    </citation>
    <scope>NUCLEOTIDE SEQUENCE [GENOMIC RNA]</scope>
</reference>
<keyword id="KW-1035">Host cytoplasm</keyword>
<keyword id="KW-0597">Phosphoprotein</keyword>
<keyword id="KW-1185">Reference proteome</keyword>
<keyword id="KW-0693">Viral RNA replication</keyword>
<dbReference type="EMBL" id="L40883">
    <property type="protein sequence ID" value="AAC42151.1"/>
    <property type="molecule type" value="Genomic_RNA"/>
</dbReference>
<dbReference type="SMR" id="Q82681"/>
<dbReference type="KEGG" id="vg:1489846"/>
<dbReference type="Proteomes" id="UP000007212">
    <property type="component" value="Segment"/>
</dbReference>
<dbReference type="GO" id="GO:0030430">
    <property type="term" value="C:host cell cytoplasm"/>
    <property type="evidence" value="ECO:0007669"/>
    <property type="project" value="UniProtKB-SubCell"/>
</dbReference>
<dbReference type="InterPro" id="IPR005010">
    <property type="entry name" value="Rhabdo_M1"/>
</dbReference>
<dbReference type="Pfam" id="PF03342">
    <property type="entry name" value="Rhabdo_M1"/>
    <property type="match status" value="1"/>
</dbReference>
<sequence>MSDGEGEQFFNLEGEDILRLESRLKTPRNDGQIGKNPRRRKEDQAPQEEPKKTTRRPDKNKGLSQLEQLILKYVEEESCQDALKDFGGLIANIRQAHQAEMTSHLEKVATEHRANLQALTKSQQEHEKVSKEILSAVIAIRSNLNENHSPLPKPLDPDQVKAARALGFGIGYRTALNVFDRIKGVTPDNAGSQEVKNLAIRAAEEDEYEGSPTFFRKVIDAVKKRMKQGQ</sequence>
<accession>Q82681</accession>
<comment type="function">
    <text evidence="1">Essential component of the RNA polymerase transcription and replication complex. Binds the viral ribonucleocapsid and positions the L polymerase on the template (By similarity).</text>
</comment>
<comment type="subcellular location">
    <subcellularLocation>
        <location evidence="1">Host cytoplasm</location>
    </subcellularLocation>
</comment>
<comment type="PTM">
    <text>Phosphorylated.</text>
</comment>
<comment type="similarity">
    <text evidence="3">Belongs to the novirhabdovirus protein P family.</text>
</comment>
<organismHost>
    <name type="scientific">Salmo</name>
    <dbReference type="NCBI Taxonomy" id="8028"/>
</organismHost>
<gene>
    <name type="primary">P</name>
</gene>
<protein>
    <recommendedName>
        <fullName>Phosphoprotein</fullName>
        <shortName>Protein P</shortName>
    </recommendedName>
    <alternativeName>
        <fullName>Protein M1</fullName>
    </alternativeName>
</protein>
<evidence type="ECO:0000250" key="1"/>
<evidence type="ECO:0000256" key="2">
    <source>
        <dbReference type="SAM" id="MobiDB-lite"/>
    </source>
</evidence>
<evidence type="ECO:0000305" key="3"/>
<feature type="chain" id="PRO_0000282896" description="Phosphoprotein">
    <location>
        <begin position="1"/>
        <end position="230"/>
    </location>
</feature>
<feature type="region of interest" description="Disordered" evidence="2">
    <location>
        <begin position="20"/>
        <end position="62"/>
    </location>
</feature>
<feature type="compositionally biased region" description="Basic and acidic residues" evidence="2">
    <location>
        <begin position="40"/>
        <end position="61"/>
    </location>
</feature>
<organism>
    <name type="scientific">Infectious hematopoietic necrosis virus (strain WRAC)</name>
    <name type="common">IHNV</name>
    <dbReference type="NCBI Taxonomy" id="429314"/>
    <lineage>
        <taxon>Viruses</taxon>
        <taxon>Riboviria</taxon>
        <taxon>Orthornavirae</taxon>
        <taxon>Negarnaviricota</taxon>
        <taxon>Haploviricotina</taxon>
        <taxon>Monjiviricetes</taxon>
        <taxon>Mononegavirales</taxon>
        <taxon>Rhabdoviridae</taxon>
        <taxon>Gammarhabdovirinae</taxon>
        <taxon>Novirhabdovirus</taxon>
        <taxon>Novirhabdovirus salmonid</taxon>
    </lineage>
</organism>
<proteinExistence type="inferred from homology"/>